<reference key="1">
    <citation type="journal article" date="1994" name="Oncogene">
        <title>Expression cDNA cloning of a novel oncogene with sequence similarity to regulators of small GTP-binding proteins.</title>
        <authorList>
            <person name="Chan A.M.-L."/>
            <person name="McGovern E.S."/>
            <person name="Catalano G."/>
            <person name="Fleming T.P."/>
            <person name="Miki T."/>
        </authorList>
    </citation>
    <scope>NUCLEOTIDE SEQUENCE [MRNA] (ISOFORM 2)</scope>
    <source>
        <tissue>Epithelium</tissue>
    </source>
</reference>
<reference key="2">
    <citation type="submission" date="2004-04" db="EMBL/GenBank/DDBJ databases">
        <title>The nucleotide sequence of a long cDNA clone isolated from human spleen.</title>
        <authorList>
            <person name="Jikuya H."/>
            <person name="Takano J."/>
            <person name="Nomura N."/>
            <person name="Kikuno R."/>
            <person name="Nagase T."/>
            <person name="Ohara O."/>
        </authorList>
    </citation>
    <scope>NUCLEOTIDE SEQUENCE [LARGE SCALE MRNA] (ISOFORM 1)</scope>
    <source>
        <tissue>Spleen</tissue>
    </source>
</reference>
<reference key="3">
    <citation type="journal article" date="2003" name="Nature">
        <title>The DNA sequence of human chromosome 7.</title>
        <authorList>
            <person name="Hillier L.W."/>
            <person name="Fulton R.S."/>
            <person name="Fulton L.A."/>
            <person name="Graves T.A."/>
            <person name="Pepin K.H."/>
            <person name="Wagner-McPherson C."/>
            <person name="Layman D."/>
            <person name="Maas J."/>
            <person name="Jaeger S."/>
            <person name="Walker R."/>
            <person name="Wylie K."/>
            <person name="Sekhon M."/>
            <person name="Becker M.C."/>
            <person name="O'Laughlin M.D."/>
            <person name="Schaller M.E."/>
            <person name="Fewell G.A."/>
            <person name="Delehaunty K.D."/>
            <person name="Miner T.L."/>
            <person name="Nash W.E."/>
            <person name="Cordes M."/>
            <person name="Du H."/>
            <person name="Sun H."/>
            <person name="Edwards J."/>
            <person name="Bradshaw-Cordum H."/>
            <person name="Ali J."/>
            <person name="Andrews S."/>
            <person name="Isak A."/>
            <person name="Vanbrunt A."/>
            <person name="Nguyen C."/>
            <person name="Du F."/>
            <person name="Lamar B."/>
            <person name="Courtney L."/>
            <person name="Kalicki J."/>
            <person name="Ozersky P."/>
            <person name="Bielicki L."/>
            <person name="Scott K."/>
            <person name="Holmes A."/>
            <person name="Harkins R."/>
            <person name="Harris A."/>
            <person name="Strong C.M."/>
            <person name="Hou S."/>
            <person name="Tomlinson C."/>
            <person name="Dauphin-Kohlberg S."/>
            <person name="Kozlowicz-Reilly A."/>
            <person name="Leonard S."/>
            <person name="Rohlfing T."/>
            <person name="Rock S.M."/>
            <person name="Tin-Wollam A.-M."/>
            <person name="Abbott A."/>
            <person name="Minx P."/>
            <person name="Maupin R."/>
            <person name="Strowmatt C."/>
            <person name="Latreille P."/>
            <person name="Miller N."/>
            <person name="Johnson D."/>
            <person name="Murray J."/>
            <person name="Woessner J.P."/>
            <person name="Wendl M.C."/>
            <person name="Yang S.-P."/>
            <person name="Schultz B.R."/>
            <person name="Wallis J.W."/>
            <person name="Spieth J."/>
            <person name="Bieri T.A."/>
            <person name="Nelson J.O."/>
            <person name="Berkowicz N."/>
            <person name="Wohldmann P.E."/>
            <person name="Cook L.L."/>
            <person name="Hickenbotham M.T."/>
            <person name="Eldred J."/>
            <person name="Williams D."/>
            <person name="Bedell J.A."/>
            <person name="Mardis E.R."/>
            <person name="Clifton S.W."/>
            <person name="Chissoe S.L."/>
            <person name="Marra M.A."/>
            <person name="Raymond C."/>
            <person name="Haugen E."/>
            <person name="Gillett W."/>
            <person name="Zhou Y."/>
            <person name="James R."/>
            <person name="Phelps K."/>
            <person name="Iadanoto S."/>
            <person name="Bubb K."/>
            <person name="Simms E."/>
            <person name="Levy R."/>
            <person name="Clendenning J."/>
            <person name="Kaul R."/>
            <person name="Kent W.J."/>
            <person name="Furey T.S."/>
            <person name="Baertsch R.A."/>
            <person name="Brent M.R."/>
            <person name="Keibler E."/>
            <person name="Flicek P."/>
            <person name="Bork P."/>
            <person name="Suyama M."/>
            <person name="Bailey J.A."/>
            <person name="Portnoy M.E."/>
            <person name="Torrents D."/>
            <person name="Chinwalla A.T."/>
            <person name="Gish W.R."/>
            <person name="Eddy S.R."/>
            <person name="McPherson J.D."/>
            <person name="Olson M.V."/>
            <person name="Eichler E.E."/>
            <person name="Green E.D."/>
            <person name="Waterston R.H."/>
            <person name="Wilson R.K."/>
        </authorList>
    </citation>
    <scope>NUCLEOTIDE SEQUENCE [LARGE SCALE GENOMIC DNA]</scope>
</reference>
<reference key="4">
    <citation type="submission" date="2005-09" db="EMBL/GenBank/DDBJ databases">
        <authorList>
            <person name="Mural R.J."/>
            <person name="Istrail S."/>
            <person name="Sutton G.G."/>
            <person name="Florea L."/>
            <person name="Halpern A.L."/>
            <person name="Mobarry C.M."/>
            <person name="Lippert R."/>
            <person name="Walenz B."/>
            <person name="Shatkay H."/>
            <person name="Dew I."/>
            <person name="Miller J.R."/>
            <person name="Flanigan M.J."/>
            <person name="Edwards N.J."/>
            <person name="Bolanos R."/>
            <person name="Fasulo D."/>
            <person name="Halldorsson B.V."/>
            <person name="Hannenhalli S."/>
            <person name="Turner R."/>
            <person name="Yooseph S."/>
            <person name="Lu F."/>
            <person name="Nusskern D.R."/>
            <person name="Shue B.C."/>
            <person name="Zheng X.H."/>
            <person name="Zhong F."/>
            <person name="Delcher A.L."/>
            <person name="Huson D.H."/>
            <person name="Kravitz S.A."/>
            <person name="Mouchard L."/>
            <person name="Reinert K."/>
            <person name="Remington K.A."/>
            <person name="Clark A.G."/>
            <person name="Waterman M.S."/>
            <person name="Eichler E.E."/>
            <person name="Adams M.D."/>
            <person name="Hunkapiller M.W."/>
            <person name="Myers E.W."/>
            <person name="Venter J.C."/>
        </authorList>
    </citation>
    <scope>NUCLEOTIDE SEQUENCE [LARGE SCALE GENOMIC DNA]</scope>
</reference>
<reference key="5">
    <citation type="journal article" date="2004" name="Genome Res.">
        <title>The status, quality, and expansion of the NIH full-length cDNA project: the Mammalian Gene Collection (MGC).</title>
        <authorList>
            <consortium name="The MGC Project Team"/>
        </authorList>
    </citation>
    <scope>NUCLEOTIDE SEQUENCE [LARGE SCALE MRNA] (ISOFORM 2)</scope>
    <source>
        <tissue>Placenta</tissue>
        <tissue>Skin</tissue>
    </source>
</reference>
<reference key="6">
    <citation type="journal article" date="2004" name="Hum. Mol. Genet.">
        <title>Expression and molecular characterization of alternative transcripts of the ARHGEF5/TIM oncogene specific for human breast cancer.</title>
        <authorList>
            <person name="Debily M.A."/>
            <person name="Camarca A."/>
            <person name="Ciullo M."/>
            <person name="Mayer C."/>
            <person name="El Marhomy S."/>
            <person name="Ba I."/>
            <person name="Jalil A."/>
            <person name="Anzisi A."/>
            <person name="Guardiola J."/>
            <person name="Piatier-Tonneau D."/>
        </authorList>
    </citation>
    <scope>FUNCTION</scope>
    <scope>SUBCELLULAR LOCATION</scope>
    <scope>ALTERNATIVE SPLICING</scope>
    <scope>TISSUE SPECIFICITY</scope>
</reference>
<reference key="7">
    <citation type="journal article" date="2005" name="Cell. Signal.">
        <title>TIM, a Dbl-related protein, regulates cell shape and cytoskeletal organization in a Rho-dependent manner.</title>
        <authorList>
            <person name="Xie X."/>
            <person name="Chang S.W."/>
            <person name="Tatsumoto T."/>
            <person name="Chan A.M."/>
            <person name="Miki T."/>
        </authorList>
    </citation>
    <scope>FUNCTION</scope>
    <scope>TISSUE SPECIFICITY</scope>
</reference>
<reference key="8">
    <citation type="journal article" date="2005" name="Neuron">
        <title>Eph-dependent tyrosine phosphorylation of ephexin1 modulates growth cone collapse.</title>
        <authorList>
            <person name="Sahin M."/>
            <person name="Greer P.L."/>
            <person name="Lin M.Z."/>
            <person name="Poucher H."/>
            <person name="Eberhart J."/>
            <person name="Schmidt S."/>
            <person name="Wright T.M."/>
            <person name="Shamah S.M."/>
            <person name="O'connell S."/>
            <person name="Cowan C.W."/>
            <person name="Hu L."/>
            <person name="Goldberg J.L."/>
            <person name="Debant A."/>
            <person name="Corfas G."/>
            <person name="Krull C.E."/>
            <person name="Greenberg M.E."/>
        </authorList>
    </citation>
    <scope>NOMENCLATURE</scope>
</reference>
<reference key="9">
    <citation type="journal article" date="2006" name="Nat. Biotechnol.">
        <title>A probability-based approach for high-throughput protein phosphorylation analysis and site localization.</title>
        <authorList>
            <person name="Beausoleil S.A."/>
            <person name="Villen J."/>
            <person name="Gerber S.A."/>
            <person name="Rush J."/>
            <person name="Gygi S.P."/>
        </authorList>
    </citation>
    <scope>PHOSPHORYLATION [LARGE SCALE ANALYSIS] AT SER-445 AND SER-450</scope>
    <scope>IDENTIFICATION BY MASS SPECTROMETRY [LARGE SCALE ANALYSIS]</scope>
    <source>
        <tissue>Cervix carcinoma</tissue>
    </source>
</reference>
<reference key="10">
    <citation type="journal article" date="2008" name="Proc. Natl. Acad. Sci. U.S.A.">
        <title>A quantitative atlas of mitotic phosphorylation.</title>
        <authorList>
            <person name="Dephoure N."/>
            <person name="Zhou C."/>
            <person name="Villen J."/>
            <person name="Beausoleil S.A."/>
            <person name="Bakalarski C.E."/>
            <person name="Elledge S.J."/>
            <person name="Gygi S.P."/>
        </authorList>
    </citation>
    <scope>PHOSPHORYLATION [LARGE SCALE ANALYSIS] AT SER-184; SER-445; SER-450 AND SER-1126</scope>
    <scope>IDENTIFICATION BY MASS SPECTROMETRY [LARGE SCALE ANALYSIS]</scope>
    <source>
        <tissue>Cervix carcinoma</tissue>
    </source>
</reference>
<reference key="11">
    <citation type="journal article" date="2010" name="Sci. Signal.">
        <title>Quantitative phosphoproteomics reveals widespread full phosphorylation site occupancy during mitosis.</title>
        <authorList>
            <person name="Olsen J.V."/>
            <person name="Vermeulen M."/>
            <person name="Santamaria A."/>
            <person name="Kumar C."/>
            <person name="Miller M.L."/>
            <person name="Jensen L.J."/>
            <person name="Gnad F."/>
            <person name="Cox J."/>
            <person name="Jensen T.S."/>
            <person name="Nigg E.A."/>
            <person name="Brunak S."/>
            <person name="Mann M."/>
        </authorList>
    </citation>
    <scope>PHOSPHORYLATION [LARGE SCALE ANALYSIS] AT SER-445; SER-450 AND SER-1126</scope>
    <scope>IDENTIFICATION BY MASS SPECTROMETRY [LARGE SCALE ANALYSIS]</scope>
    <source>
        <tissue>Cervix carcinoma</tissue>
    </source>
</reference>
<reference key="12">
    <citation type="journal article" date="2011" name="Sci. Signal.">
        <title>System-wide temporal characterization of the proteome and phosphoproteome of human embryonic stem cell differentiation.</title>
        <authorList>
            <person name="Rigbolt K.T."/>
            <person name="Prokhorova T.A."/>
            <person name="Akimov V."/>
            <person name="Henningsen J."/>
            <person name="Johansen P.T."/>
            <person name="Kratchmarova I."/>
            <person name="Kassem M."/>
            <person name="Mann M."/>
            <person name="Olsen J.V."/>
            <person name="Blagoev B."/>
        </authorList>
    </citation>
    <scope>IDENTIFICATION BY MASS SPECTROMETRY [LARGE SCALE ANALYSIS]</scope>
</reference>
<reference key="13">
    <citation type="journal article" date="2013" name="J. Proteome Res.">
        <title>Toward a comprehensive characterization of a human cancer cell phosphoproteome.</title>
        <authorList>
            <person name="Zhou H."/>
            <person name="Di Palma S."/>
            <person name="Preisinger C."/>
            <person name="Peng M."/>
            <person name="Polat A.N."/>
            <person name="Heck A.J."/>
            <person name="Mohammed S."/>
        </authorList>
    </citation>
    <scope>PHOSPHORYLATION [LARGE SCALE ANALYSIS] AT SER-445; SER-450; SER-983; SER-1011; SER-1044 AND SER-1126</scope>
    <scope>IDENTIFICATION BY MASS SPECTROMETRY [LARGE SCALE ANALYSIS]</scope>
    <source>
        <tissue>Cervix carcinoma</tissue>
    </source>
</reference>
<reference key="14">
    <citation type="journal article" date="2014" name="J. Proteomics">
        <title>An enzyme assisted RP-RPLC approach for in-depth analysis of human liver phosphoproteome.</title>
        <authorList>
            <person name="Bian Y."/>
            <person name="Song C."/>
            <person name="Cheng K."/>
            <person name="Dong M."/>
            <person name="Wang F."/>
            <person name="Huang J."/>
            <person name="Sun D."/>
            <person name="Wang L."/>
            <person name="Ye M."/>
            <person name="Zou H."/>
        </authorList>
    </citation>
    <scope>PHOSPHORYLATION [LARGE SCALE ANALYSIS] AT SER-450</scope>
    <scope>IDENTIFICATION BY MASS SPECTROMETRY [LARGE SCALE ANALYSIS]</scope>
    <source>
        <tissue>Liver</tissue>
    </source>
</reference>
<reference key="15">
    <citation type="journal article" date="2014" name="Mol. Cell. Proteomics">
        <title>Immunoaffinity enrichment and mass spectrometry analysis of protein methylation.</title>
        <authorList>
            <person name="Guo A."/>
            <person name="Gu H."/>
            <person name="Zhou J."/>
            <person name="Mulhern D."/>
            <person name="Wang Y."/>
            <person name="Lee K.A."/>
            <person name="Yang V."/>
            <person name="Aguiar M."/>
            <person name="Kornhauser J."/>
            <person name="Jia X."/>
            <person name="Ren J."/>
            <person name="Beausoleil S.A."/>
            <person name="Silva J.C."/>
            <person name="Vemulapalli V."/>
            <person name="Bedford M.T."/>
            <person name="Comb M.J."/>
        </authorList>
    </citation>
    <scope>METHYLATION [LARGE SCALE ANALYSIS] AT ARG-866</scope>
    <scope>IDENTIFICATION BY MASS SPECTROMETRY [LARGE SCALE ANALYSIS]</scope>
    <source>
        <tissue>Colon carcinoma</tissue>
    </source>
</reference>
<reference key="16">
    <citation type="journal article" date="2015" name="J. Biol. Chem.">
        <title>Odontogenic ameloblast-associated protein (ODAM) Mediates Junctional Epithelium Attachment to Tooth via Integrin-ODAM-Rho guanine nucleotide exchange factor 5 (ARHGEF5)-Ras homolog gene family member A (RhoA) Signaling.</title>
        <authorList>
            <person name="Lee H.K."/>
            <person name="Ji S."/>
            <person name="Park S.J."/>
            <person name="Choung H.W."/>
            <person name="Choi Y."/>
            <person name="Lee H.J."/>
            <person name="Park S.Y."/>
            <person name="Park J.C."/>
        </authorList>
    </citation>
    <scope>INTERACTION WITH ODAM</scope>
    <scope>SUBCELLULAR LOCATION</scope>
</reference>
<feature type="chain" id="PRO_0000080916" description="Rho guanine nucleotide exchange factor 5">
    <location>
        <begin position="1"/>
        <end position="1597"/>
    </location>
</feature>
<feature type="domain" description="DH" evidence="2">
    <location>
        <begin position="1174"/>
        <end position="1358"/>
    </location>
</feature>
<feature type="domain" description="PH" evidence="3">
    <location>
        <begin position="1390"/>
        <end position="1502"/>
    </location>
</feature>
<feature type="domain" description="SH3" evidence="4">
    <location>
        <begin position="1510"/>
        <end position="1571"/>
    </location>
</feature>
<feature type="region of interest" description="Disordered" evidence="5">
    <location>
        <begin position="138"/>
        <end position="246"/>
    </location>
</feature>
<feature type="region of interest" description="Disordered" evidence="5">
    <location>
        <begin position="258"/>
        <end position="455"/>
    </location>
</feature>
<feature type="region of interest" description="Disordered" evidence="5">
    <location>
        <begin position="467"/>
        <end position="1072"/>
    </location>
</feature>
<feature type="compositionally biased region" description="Polar residues" evidence="5">
    <location>
        <begin position="192"/>
        <end position="204"/>
    </location>
</feature>
<feature type="compositionally biased region" description="Low complexity" evidence="5">
    <location>
        <begin position="217"/>
        <end position="237"/>
    </location>
</feature>
<feature type="compositionally biased region" description="Basic and acidic residues" evidence="5">
    <location>
        <begin position="266"/>
        <end position="278"/>
    </location>
</feature>
<feature type="compositionally biased region" description="Acidic residues" evidence="5">
    <location>
        <begin position="299"/>
        <end position="309"/>
    </location>
</feature>
<feature type="compositionally biased region" description="Basic and acidic residues" evidence="5">
    <location>
        <begin position="323"/>
        <end position="368"/>
    </location>
</feature>
<feature type="compositionally biased region" description="Basic and acidic residues" evidence="5">
    <location>
        <begin position="394"/>
        <end position="404"/>
    </location>
</feature>
<feature type="compositionally biased region" description="Polar residues" evidence="5">
    <location>
        <begin position="428"/>
        <end position="438"/>
    </location>
</feature>
<feature type="compositionally biased region" description="Basic and acidic residues" evidence="5">
    <location>
        <begin position="474"/>
        <end position="490"/>
    </location>
</feature>
<feature type="compositionally biased region" description="Pro residues" evidence="5">
    <location>
        <begin position="512"/>
        <end position="522"/>
    </location>
</feature>
<feature type="compositionally biased region" description="Polar residues" evidence="5">
    <location>
        <begin position="583"/>
        <end position="601"/>
    </location>
</feature>
<feature type="compositionally biased region" description="Polar residues" evidence="5">
    <location>
        <begin position="655"/>
        <end position="682"/>
    </location>
</feature>
<feature type="compositionally biased region" description="Basic and acidic residues" evidence="5">
    <location>
        <begin position="731"/>
        <end position="746"/>
    </location>
</feature>
<feature type="compositionally biased region" description="Pro residues" evidence="5">
    <location>
        <begin position="812"/>
        <end position="828"/>
    </location>
</feature>
<feature type="compositionally biased region" description="Pro residues" evidence="5">
    <location>
        <begin position="838"/>
        <end position="856"/>
    </location>
</feature>
<feature type="compositionally biased region" description="Low complexity" evidence="5">
    <location>
        <begin position="901"/>
        <end position="920"/>
    </location>
</feature>
<feature type="compositionally biased region" description="Polar residues" evidence="5">
    <location>
        <begin position="926"/>
        <end position="941"/>
    </location>
</feature>
<feature type="compositionally biased region" description="Basic and acidic residues" evidence="5">
    <location>
        <begin position="950"/>
        <end position="969"/>
    </location>
</feature>
<feature type="compositionally biased region" description="Basic and acidic residues" evidence="5">
    <location>
        <begin position="990"/>
        <end position="1012"/>
    </location>
</feature>
<feature type="compositionally biased region" description="Basic and acidic residues" evidence="5">
    <location>
        <begin position="1057"/>
        <end position="1072"/>
    </location>
</feature>
<feature type="modified residue" description="Phosphoserine" evidence="13">
    <location>
        <position position="184"/>
    </location>
</feature>
<feature type="modified residue" description="Phosphoserine" evidence="12 13 14 15">
    <location>
        <position position="445"/>
    </location>
</feature>
<feature type="modified residue" description="Phosphoserine" evidence="12 13 14 15 17">
    <location>
        <position position="450"/>
    </location>
</feature>
<feature type="modified residue" description="Asymmetric dimethylarginine" evidence="16">
    <location>
        <position position="866"/>
    </location>
</feature>
<feature type="modified residue" description="Phosphoserine" evidence="15">
    <location>
        <position position="983"/>
    </location>
</feature>
<feature type="modified residue" description="Phosphoserine" evidence="15">
    <location>
        <position position="1011"/>
    </location>
</feature>
<feature type="modified residue" description="Phosphoserine" evidence="15">
    <location>
        <position position="1044"/>
    </location>
</feature>
<feature type="modified residue" description="Phosphoserine" evidence="13 14 15">
    <location>
        <position position="1126"/>
    </location>
</feature>
<feature type="splice variant" id="VSP_035175" description="In isoform 2." evidence="9 10">
    <location>
        <begin position="1"/>
        <end position="1078"/>
    </location>
</feature>
<feature type="sequence conflict" description="In Ref. 2; BAD18708." evidence="11" ref="2">
    <original>E</original>
    <variation>G</variation>
    <location>
        <position position="487"/>
    </location>
</feature>
<feature type="sequence conflict" description="In Ref. 2; BAD18708." evidence="11" ref="2">
    <original>P</original>
    <variation>Q</variation>
    <location>
        <position position="575"/>
    </location>
</feature>
<accession>Q12774</accession>
<accession>A6NNJ2</accession>
<accession>Q6ZML7</accession>
<name>ARHG5_HUMAN</name>
<comment type="function">
    <text evidence="1 6 7">Guanine nucleotide exchange factor which activates Rho GTPases (PubMed:15601624). Strongly activates RHOA (PubMed:15601624). Also strongly activates RHOB, weakly activates RHOC and RHOG and shows no effect on RHOD, RHOV, RHOQ or RAC1 (By similarity). Involved in regulation of cell shape and actin cytoskeletal organization (PubMed:15601624). Plays a role in actin organization by generating a loss of actin stress fibers and the formation of membrane ruffles and filopodia (PubMed:14662653). Required for SRC-induced podosome formation (By similarity). Involved in positive regulation of immature dendritic cell migration (By similarity).</text>
</comment>
<comment type="subunit">
    <text evidence="1 8">Interacts with SRC (By similarity). Forms a ternary complex with SRC and the PI3K 85 kDa subunit (By similarity). Interacts with and is activated by the heterodimer formed by GNB1 and GNG2 (By similarity). Interacts with ODAM (via C-terminus) (PubMed:25911094). Interacts with RHOA (By similarity).</text>
</comment>
<comment type="interaction">
    <interactant intactId="EBI-602199">
        <id>Q12774</id>
    </interactant>
    <interactant intactId="EBI-739580">
        <id>Q13137</id>
        <label>CALCOCO2</label>
    </interactant>
    <organismsDiffer>false</organismsDiffer>
    <experiments>3</experiments>
</comment>
<comment type="interaction">
    <interactant intactId="EBI-602199">
        <id>Q12774</id>
    </interactant>
    <interactant intactId="EBI-3866319">
        <id>Q9Y2V7</id>
        <label>COG6</label>
    </interactant>
    <organismsDiffer>false</organismsDiffer>
    <experiments>5</experiments>
</comment>
<comment type="interaction">
    <interactant intactId="EBI-602199">
        <id>Q12774</id>
    </interactant>
    <interactant intactId="EBI-2349927">
        <id>Q5JST6</id>
        <label>EFHC2</label>
    </interactant>
    <organismsDiffer>false</organismsDiffer>
    <experiments>6</experiments>
</comment>
<comment type="interaction">
    <interactant intactId="EBI-602199">
        <id>Q12774</id>
    </interactant>
    <interactant intactId="EBI-6255981">
        <id>Q7L775</id>
        <label>EPM2AIP1</label>
    </interactant>
    <organismsDiffer>false</organismsDiffer>
    <experiments>3</experiments>
</comment>
<comment type="interaction">
    <interactant intactId="EBI-602199">
        <id>Q12774</id>
    </interactant>
    <interactant intactId="EBI-401755">
        <id>P62993</id>
        <label>GRB2</label>
    </interactant>
    <organismsDiffer>false</organismsDiffer>
    <experiments>8</experiments>
</comment>
<comment type="interaction">
    <interactant intactId="EBI-602199">
        <id>Q12774</id>
    </interactant>
    <interactant intactId="EBI-7116203">
        <id>O75031</id>
        <label>HSF2BP</label>
    </interactant>
    <organismsDiffer>false</organismsDiffer>
    <experiments>3</experiments>
</comment>
<comment type="interaction">
    <interactant intactId="EBI-602199">
        <id>Q12774</id>
    </interactant>
    <interactant intactId="EBI-720457">
        <id>Q96EW2</id>
        <label>HSPBAP1</label>
    </interactant>
    <organismsDiffer>false</organismsDiffer>
    <experiments>6</experiments>
</comment>
<comment type="interaction">
    <interactant intactId="EBI-602199">
        <id>Q12774</id>
    </interactant>
    <interactant intactId="EBI-11959475">
        <id>P25791-3</id>
        <label>LMO2</label>
    </interactant>
    <organismsDiffer>false</organismsDiffer>
    <experiments>3</experiments>
</comment>
<comment type="interaction">
    <interactant intactId="EBI-602199">
        <id>Q12774</id>
    </interactant>
    <interactant intactId="EBI-11477916">
        <id>Q96KN4</id>
        <label>LRATD1</label>
    </interactant>
    <organismsDiffer>false</organismsDiffer>
    <experiments>5</experiments>
</comment>
<comment type="interaction">
    <interactant intactId="EBI-602199">
        <id>Q12774</id>
    </interactant>
    <interactant intactId="EBI-11323212">
        <id>Q8IYB1</id>
        <label>MB21D2</label>
    </interactant>
    <organismsDiffer>false</organismsDiffer>
    <experiments>3</experiments>
</comment>
<comment type="interaction">
    <interactant intactId="EBI-602199">
        <id>Q12774</id>
    </interactant>
    <interactant intactId="EBI-10172526">
        <id>Q9UJV3-2</id>
        <label>MID2</label>
    </interactant>
    <organismsDiffer>false</organismsDiffer>
    <experiments>3</experiments>
</comment>
<comment type="interaction">
    <interactant intactId="EBI-602199">
        <id>Q12774</id>
    </interactant>
    <interactant intactId="EBI-79165">
        <id>Q9NRD5</id>
        <label>PICK1</label>
    </interactant>
    <organismsDiffer>false</organismsDiffer>
    <experiments>3</experiments>
</comment>
<comment type="interaction">
    <interactant intactId="EBI-602199">
        <id>Q12774</id>
    </interactant>
    <interactant intactId="EBI-949255">
        <id>Q58EX7</id>
        <label>PLEKHG4</label>
    </interactant>
    <organismsDiffer>false</organismsDiffer>
    <experiments>3</experiments>
</comment>
<comment type="interaction">
    <interactant intactId="EBI-602199">
        <id>Q12774</id>
    </interactant>
    <interactant intactId="EBI-1055079">
        <id>O15160</id>
        <label>POLR1C</label>
    </interactant>
    <organismsDiffer>false</organismsDiffer>
    <experiments>5</experiments>
</comment>
<comment type="interaction">
    <interactant intactId="EBI-602199">
        <id>Q12774</id>
    </interactant>
    <interactant intactId="EBI-446668">
        <id>P61586</id>
        <label>RHOA</label>
    </interactant>
    <organismsDiffer>false</organismsDiffer>
    <experiments>2</experiments>
</comment>
<comment type="interaction">
    <interactant intactId="EBI-602199">
        <id>Q12774</id>
    </interactant>
    <interactant intactId="EBI-476295">
        <id>P31947</id>
        <label>SFN</label>
    </interactant>
    <organismsDiffer>false</organismsDiffer>
    <experiments>4</experiments>
</comment>
<comment type="interaction">
    <interactant intactId="EBI-602199">
        <id>Q12774</id>
    </interactant>
    <interactant intactId="EBI-10269374">
        <id>Q8ND83</id>
        <label>SLAIN1</label>
    </interactant>
    <organismsDiffer>false</organismsDiffer>
    <experiments>3</experiments>
</comment>
<comment type="interaction">
    <interactant intactId="EBI-602199">
        <id>Q12774</id>
    </interactant>
    <interactant intactId="EBI-12264956">
        <id>Q9NVG8</id>
        <label>TBC1D13</label>
    </interactant>
    <organismsDiffer>false</organismsDiffer>
    <experiments>6</experiments>
</comment>
<comment type="interaction">
    <interactant intactId="EBI-602199">
        <id>Q12774</id>
    </interactant>
    <interactant intactId="EBI-13636688">
        <id>P15884-3</id>
        <label>TCF4</label>
    </interactant>
    <organismsDiffer>false</organismsDiffer>
    <experiments>3</experiments>
</comment>
<comment type="interaction">
    <interactant intactId="EBI-602199">
        <id>Q12774</id>
    </interactant>
    <interactant intactId="EBI-719493">
        <id>P14373</id>
        <label>TRIM27</label>
    </interactant>
    <organismsDiffer>false</organismsDiffer>
    <experiments>6</experiments>
</comment>
<comment type="interaction">
    <interactant intactId="EBI-602199">
        <id>Q12774</id>
    </interactant>
    <interactant intactId="EBI-2130429">
        <id>Q9BYV2</id>
        <label>TRIM54</label>
    </interactant>
    <organismsDiffer>false</organismsDiffer>
    <experiments>6</experiments>
</comment>
<comment type="interaction">
    <interactant intactId="EBI-602199">
        <id>Q12774</id>
    </interactant>
    <interactant intactId="EBI-527853">
        <id>Q9UGI0</id>
        <label>ZRANB1</label>
    </interactant>
    <organismsDiffer>false</organismsDiffer>
    <experiments>3</experiments>
</comment>
<comment type="subcellular location">
    <subcellularLocation>
        <location evidence="6 8">Cytoplasm</location>
    </subcellularLocation>
    <subcellularLocation>
        <location evidence="6">Nucleus</location>
    </subcellularLocation>
    <subcellularLocation>
        <location evidence="1">Cell projection</location>
        <location evidence="1">Podosome</location>
    </subcellularLocation>
</comment>
<comment type="alternative products">
    <event type="alternative splicing"/>
    <isoform>
        <id>Q12774-1</id>
        <name>1</name>
        <sequence type="displayed"/>
    </isoform>
    <isoform>
        <id>Q12774-2</id>
        <name>2</name>
        <sequence type="described" ref="VSP_035175"/>
    </isoform>
    <text evidence="6">A number of additional isoforms are detected in primary breast tumors but not in normal tissues.</text>
</comment>
<comment type="tissue specificity">
    <text evidence="6 7">Ubiquitously expressed with highest levels in placenta. High levels are also found in colon, kidney, trachea, prostate, liver, pancreas, pituitary gland, thyroid gland and mammary gland. In fetal tissues, expressed at high levels in kidney, lung and liver (PubMed:15601624). Expressed at low levels in lung and heart (PubMed:14662653).</text>
</comment>
<comment type="domain">
    <text evidence="1">The PH domain binds to phosphoinositides and is essential for podosome formation.</text>
</comment>
<comment type="PTM">
    <text evidence="1">Activation of SRC induces tyrosine phosphorylation of ARHGEF5.</text>
</comment>
<comment type="sequence caution" evidence="11">
    <conflict type="erroneous initiation">
        <sequence resource="EMBL-CDS" id="BAD18708"/>
    </conflict>
    <text>Extended N-terminus.</text>
</comment>
<sequence length="1597" mass="176799">MEAEEAQRGASPPISAIEEFSIIPEAPMRSSQVSALGLEAQEDEDPSYKWREEHRLSATQQSELRDVCDYAIETMPSFPKEGSADVEPNQESLVAEACDTPEHWEAVPQSLAGRQARTLAPPELWACPIQSEHLDMAPFSSDLGSEEEEVEFWPGLTSLTLGSGQAEEEEETSSDNSGQTRYYSPCEEHPAETNQNEGSESGTIRQGEELPPEELQESQGLLHPQEVQVLEEQGQQEAGFRGEGTLREDVCADGLLGEEQMIEQVNDEKGEQKQKQEQVQDVMLGRQGERMGLTGEPEGLNDGEWEQEDMERKAQGQGGPEQGEERKRELQVPEENRADSQDEKSQTFLGKSEEVTGKQEDHGIKEKGVPVSGQEAKEPESWDGGRLGAVGRARSREEENEHHGPSMPALIAPEDSPHCDLFPGASYLMTQIPGTQTESRAEELSPAALSPSLEPIRCSHQPISLLGSFLTEESPDKEIDQNSQQEESRLRKGTVSSQGTEVVFASASVTPPRTPDSAPPSPAEAYPITPASVSARPPVAFPRRETSCAARAPETASAPLSMDDPSPCGTSEMCPAALYGFPSTGTSPPRPPANSTGTVQHLRSDSFPGSHRTEQTPDLVGMLLSYSHSELPQRPPKPAIYSSVTPRRDRRSGRDYSTVSASPTALSTLKQDSQESISNLERPSSPPSIQPWVSPHNPAFATESPAYGSSPSFVSMEDVRIHEPLPPPPPQRRDTHPSVVETDGHARVVVPTLKQHSHPPPLALGSGLHAPHKGPLPQASDPAVARQHRPLPSTPDSSHHAQATPRWRYNKPLPPTPDLPQPHLPPISAPGSSRIYRPLPPLPIIDPPTEPPPLPPKSRGRSRSTRGGHMNSGGHAKTRPACQDWTVPLPASAGRTSWPPATARSTESFTSTSRSKSEVSPGMAFSNMTNFLCPSSPTTPWTPELQGPTSKDEAGVSEHPEAPAREPLRRTTPQQGASGPGRSPVGQARQPEKPSHLHLEKASSWPHRRDSGRPPGDSSGQAVAPSEGANKHKGWSRQGLRRPSILPEGSSDSRGPAVEKHPGPSDTVVFREKKPKEVMGGFSRRCSKLINSSQLLYQEYSDVVLNKEIQSQQRLESLSETPGPSSPRQPRKALVSSESYLQRLSMASSGSLWQEIPVVRNSTVLLSMTHEDQKLQEVKFELIVSEASYLRSLNIAVDHFQLSTSLRATLSNQEHQWLFSRLQDVRDVSATFLSDLEENFENNIFSFQVCDVVLNHAPDFRRVYLPYVTNQTYQERTFQSLMNSNSNFREVLEKLESDPVCQRLSLKSFLILPFQRITRLKLLLQNILKRTQPGSSEEAEATKAHHALEQLIRDCNNNVQSMRRTEELIYLSQKIEFECKIFPLISQSRWLVKSGELTALEFSASPGLRRKLNTRPVHLHLFNDCLLLSRPREGSRFLVFDHAPFSSIRGEKCEMKLHGPHKNLFRLFLRQNTQGAQAEFLFRTETQSEKLRWISALAMPREELDLLECYNSPQVQCLRAYKPRENDELALEKADVVMVTQQSSDGWLEGVRLSDGERGWFPVQQVEFISNPEVRAQNLKEAHRVKTAKLQLVEQQA</sequence>
<organism>
    <name type="scientific">Homo sapiens</name>
    <name type="common">Human</name>
    <dbReference type="NCBI Taxonomy" id="9606"/>
    <lineage>
        <taxon>Eukaryota</taxon>
        <taxon>Metazoa</taxon>
        <taxon>Chordata</taxon>
        <taxon>Craniata</taxon>
        <taxon>Vertebrata</taxon>
        <taxon>Euteleostomi</taxon>
        <taxon>Mammalia</taxon>
        <taxon>Eutheria</taxon>
        <taxon>Euarchontoglires</taxon>
        <taxon>Primates</taxon>
        <taxon>Haplorrhini</taxon>
        <taxon>Catarrhini</taxon>
        <taxon>Hominidae</taxon>
        <taxon>Homo</taxon>
    </lineage>
</organism>
<keyword id="KW-0025">Alternative splicing</keyword>
<keyword id="KW-0965">Cell junction</keyword>
<keyword id="KW-0966">Cell projection</keyword>
<keyword id="KW-0963">Cytoplasm</keyword>
<keyword id="KW-0344">Guanine-nucleotide releasing factor</keyword>
<keyword id="KW-0446">Lipid-binding</keyword>
<keyword id="KW-0488">Methylation</keyword>
<keyword id="KW-0539">Nucleus</keyword>
<keyword id="KW-0597">Phosphoprotein</keyword>
<keyword id="KW-1267">Proteomics identification</keyword>
<keyword id="KW-0656">Proto-oncogene</keyword>
<keyword id="KW-1185">Reference proteome</keyword>
<keyword id="KW-0728">SH3 domain</keyword>
<proteinExistence type="evidence at protein level"/>
<evidence type="ECO:0000250" key="1">
    <source>
        <dbReference type="UniProtKB" id="E9Q7D5"/>
    </source>
</evidence>
<evidence type="ECO:0000255" key="2">
    <source>
        <dbReference type="PROSITE-ProRule" id="PRU00062"/>
    </source>
</evidence>
<evidence type="ECO:0000255" key="3">
    <source>
        <dbReference type="PROSITE-ProRule" id="PRU00145"/>
    </source>
</evidence>
<evidence type="ECO:0000255" key="4">
    <source>
        <dbReference type="PROSITE-ProRule" id="PRU00192"/>
    </source>
</evidence>
<evidence type="ECO:0000256" key="5">
    <source>
        <dbReference type="SAM" id="MobiDB-lite"/>
    </source>
</evidence>
<evidence type="ECO:0000269" key="6">
    <source>
    </source>
</evidence>
<evidence type="ECO:0000269" key="7">
    <source>
    </source>
</evidence>
<evidence type="ECO:0000269" key="8">
    <source>
    </source>
</evidence>
<evidence type="ECO:0000303" key="9">
    <source>
    </source>
</evidence>
<evidence type="ECO:0000303" key="10">
    <source>
    </source>
</evidence>
<evidence type="ECO:0000305" key="11"/>
<evidence type="ECO:0007744" key="12">
    <source>
    </source>
</evidence>
<evidence type="ECO:0007744" key="13">
    <source>
    </source>
</evidence>
<evidence type="ECO:0007744" key="14">
    <source>
    </source>
</evidence>
<evidence type="ECO:0007744" key="15">
    <source>
    </source>
</evidence>
<evidence type="ECO:0007744" key="16">
    <source>
    </source>
</evidence>
<evidence type="ECO:0007744" key="17">
    <source>
    </source>
</evidence>
<protein>
    <recommendedName>
        <fullName>Rho guanine nucleotide exchange factor 5</fullName>
    </recommendedName>
    <alternativeName>
        <fullName>Ephexin-3</fullName>
    </alternativeName>
    <alternativeName>
        <fullName>Guanine nucleotide regulatory protein TIM</fullName>
    </alternativeName>
    <alternativeName>
        <fullName>Oncogene TIM</fullName>
    </alternativeName>
    <alternativeName>
        <fullName>Transforming immortalized mammary oncogene</fullName>
    </alternativeName>
    <alternativeName>
        <fullName>p60 TIM</fullName>
    </alternativeName>
</protein>
<gene>
    <name type="primary">ARHGEF5</name>
    <name type="synonym">TIM</name>
</gene>
<dbReference type="EMBL" id="U02082">
    <property type="protein sequence ID" value="AAA18010.1"/>
    <property type="molecule type" value="mRNA"/>
</dbReference>
<dbReference type="EMBL" id="AK160365">
    <property type="protein sequence ID" value="BAD18708.1"/>
    <property type="status" value="ALT_INIT"/>
    <property type="molecule type" value="mRNA"/>
</dbReference>
<dbReference type="EMBL" id="AC004534">
    <property type="protein sequence ID" value="AAC12958.1"/>
    <property type="molecule type" value="Genomic_DNA"/>
</dbReference>
<dbReference type="EMBL" id="CH471146">
    <property type="protein sequence ID" value="EAW80096.1"/>
    <property type="molecule type" value="Genomic_DNA"/>
</dbReference>
<dbReference type="EMBL" id="BC010046">
    <property type="protein sequence ID" value="AAH10046.1"/>
    <property type="molecule type" value="mRNA"/>
</dbReference>
<dbReference type="EMBL" id="BC011839">
    <property type="protein sequence ID" value="AAH11839.1"/>
    <property type="molecule type" value="mRNA"/>
</dbReference>
<dbReference type="EMBL" id="BC014555">
    <property type="protein sequence ID" value="AAH14555.1"/>
    <property type="molecule type" value="mRNA"/>
</dbReference>
<dbReference type="CCDS" id="CCDS34771.1">
    <molecule id="Q12774-1"/>
</dbReference>
<dbReference type="PIR" id="I38402">
    <property type="entry name" value="I38402"/>
</dbReference>
<dbReference type="RefSeq" id="NP_005426.2">
    <molecule id="Q12774-1"/>
    <property type="nucleotide sequence ID" value="NM_005435.4"/>
</dbReference>
<dbReference type="SMR" id="Q12774"/>
<dbReference type="BioGRID" id="113696">
    <property type="interactions" value="89"/>
</dbReference>
<dbReference type="FunCoup" id="Q12774">
    <property type="interactions" value="233"/>
</dbReference>
<dbReference type="IntAct" id="Q12774">
    <property type="interactions" value="63"/>
</dbReference>
<dbReference type="MINT" id="Q12774"/>
<dbReference type="STRING" id="9606.ENSP00000056217"/>
<dbReference type="GlyGen" id="Q12774">
    <property type="glycosylation" value="7 sites, 1 O-linked glycan (3 sites)"/>
</dbReference>
<dbReference type="iPTMnet" id="Q12774"/>
<dbReference type="PhosphoSitePlus" id="Q12774"/>
<dbReference type="BioMuta" id="ARHGEF5"/>
<dbReference type="DMDM" id="290457679"/>
<dbReference type="jPOST" id="Q12774"/>
<dbReference type="MassIVE" id="Q12774"/>
<dbReference type="PaxDb" id="9606-ENSP00000056217"/>
<dbReference type="PeptideAtlas" id="Q12774"/>
<dbReference type="ProteomicsDB" id="58920">
    <molecule id="Q12774-1"/>
</dbReference>
<dbReference type="ProteomicsDB" id="58921">
    <molecule id="Q12774-2"/>
</dbReference>
<dbReference type="Pumba" id="Q12774"/>
<dbReference type="Antibodypedia" id="18513">
    <property type="antibodies" value="340 antibodies from 35 providers"/>
</dbReference>
<dbReference type="DNASU" id="7984"/>
<dbReference type="Ensembl" id="ENST00000056217.10">
    <molecule id="Q12774-1"/>
    <property type="protein sequence ID" value="ENSP00000056217.5"/>
    <property type="gene ID" value="ENSG00000050327.15"/>
</dbReference>
<dbReference type="Ensembl" id="ENST00000471847.2">
    <molecule id="Q12774-2"/>
    <property type="protein sequence ID" value="ENSP00000418227.1"/>
    <property type="gene ID" value="ENSG00000050327.15"/>
</dbReference>
<dbReference type="GeneID" id="7984"/>
<dbReference type="KEGG" id="hsa:7984"/>
<dbReference type="MANE-Select" id="ENST00000056217.10">
    <property type="protein sequence ID" value="ENSP00000056217.5"/>
    <property type="RefSeq nucleotide sequence ID" value="NM_005435.4"/>
    <property type="RefSeq protein sequence ID" value="NP_005426.2"/>
</dbReference>
<dbReference type="UCSC" id="uc003wel.4">
    <molecule id="Q12774-1"/>
    <property type="organism name" value="human"/>
</dbReference>
<dbReference type="AGR" id="HGNC:13209"/>
<dbReference type="CTD" id="7984"/>
<dbReference type="DisGeNET" id="7984"/>
<dbReference type="GeneCards" id="ARHGEF5"/>
<dbReference type="HGNC" id="HGNC:13209">
    <property type="gene designation" value="ARHGEF5"/>
</dbReference>
<dbReference type="HPA" id="ENSG00000050327">
    <property type="expression patterns" value="Tissue enhanced (skin)"/>
</dbReference>
<dbReference type="MIM" id="600888">
    <property type="type" value="gene"/>
</dbReference>
<dbReference type="neXtProt" id="NX_Q12774"/>
<dbReference type="OpenTargets" id="ENSG00000050327"/>
<dbReference type="PharmGKB" id="PA24975"/>
<dbReference type="VEuPathDB" id="HostDB:ENSG00000050327"/>
<dbReference type="eggNOG" id="KOG3523">
    <property type="taxonomic scope" value="Eukaryota"/>
</dbReference>
<dbReference type="GeneTree" id="ENSGT01030000234571"/>
<dbReference type="HOGENOM" id="CLU_003633_0_0_1"/>
<dbReference type="InParanoid" id="Q12774"/>
<dbReference type="OMA" id="EKRHVHP"/>
<dbReference type="OrthoDB" id="27593at2759"/>
<dbReference type="PAN-GO" id="Q12774">
    <property type="GO annotations" value="3 GO annotations based on evolutionary models"/>
</dbReference>
<dbReference type="PhylomeDB" id="Q12774"/>
<dbReference type="TreeFam" id="TF342609"/>
<dbReference type="PathwayCommons" id="Q12774"/>
<dbReference type="Reactome" id="R-HSA-193648">
    <property type="pathway name" value="NRAGE signals death through JNK"/>
</dbReference>
<dbReference type="Reactome" id="R-HSA-416482">
    <property type="pathway name" value="G alpha (12/13) signalling events"/>
</dbReference>
<dbReference type="Reactome" id="R-HSA-8980692">
    <property type="pathway name" value="RHOA GTPase cycle"/>
</dbReference>
<dbReference type="Reactome" id="R-HSA-9013026">
    <property type="pathway name" value="RHOB GTPase cycle"/>
</dbReference>
<dbReference type="Reactome" id="R-HSA-9013106">
    <property type="pathway name" value="RHOC GTPase cycle"/>
</dbReference>
<dbReference type="Reactome" id="R-HSA-9013148">
    <property type="pathway name" value="CDC42 GTPase cycle"/>
</dbReference>
<dbReference type="Reactome" id="R-HSA-9013149">
    <property type="pathway name" value="RAC1 GTPase cycle"/>
</dbReference>
<dbReference type="Reactome" id="R-HSA-9013408">
    <property type="pathway name" value="RHOG GTPase cycle"/>
</dbReference>
<dbReference type="SignaLink" id="Q12774"/>
<dbReference type="SIGNOR" id="Q12774"/>
<dbReference type="BioGRID-ORCS" id="7984">
    <property type="hits" value="55 hits in 1140 CRISPR screens"/>
</dbReference>
<dbReference type="ChiTaRS" id="ARHGEF5">
    <property type="organism name" value="human"/>
</dbReference>
<dbReference type="GeneWiki" id="ARHGEF5"/>
<dbReference type="GenomeRNAi" id="7984"/>
<dbReference type="Pharos" id="Q12774">
    <property type="development level" value="Tbio"/>
</dbReference>
<dbReference type="PRO" id="PR:Q12774"/>
<dbReference type="Proteomes" id="UP000005640">
    <property type="component" value="Chromosome 7"/>
</dbReference>
<dbReference type="RNAct" id="Q12774">
    <property type="molecule type" value="protein"/>
</dbReference>
<dbReference type="Bgee" id="ENSG00000050327">
    <property type="expression patterns" value="Expressed in lower esophagus mucosa and 93 other cell types or tissues"/>
</dbReference>
<dbReference type="ExpressionAtlas" id="Q12774">
    <property type="expression patterns" value="baseline and differential"/>
</dbReference>
<dbReference type="GO" id="GO:0070161">
    <property type="term" value="C:anchoring junction"/>
    <property type="evidence" value="ECO:0007669"/>
    <property type="project" value="UniProtKB-KW"/>
</dbReference>
<dbReference type="GO" id="GO:0071944">
    <property type="term" value="C:cell periphery"/>
    <property type="evidence" value="ECO:0000314"/>
    <property type="project" value="UniProtKB"/>
</dbReference>
<dbReference type="GO" id="GO:0042995">
    <property type="term" value="C:cell projection"/>
    <property type="evidence" value="ECO:0007669"/>
    <property type="project" value="UniProtKB-KW"/>
</dbReference>
<dbReference type="GO" id="GO:0005737">
    <property type="term" value="C:cytoplasm"/>
    <property type="evidence" value="ECO:0000314"/>
    <property type="project" value="UniProtKB"/>
</dbReference>
<dbReference type="GO" id="GO:0005829">
    <property type="term" value="C:cytosol"/>
    <property type="evidence" value="ECO:0000314"/>
    <property type="project" value="HPA"/>
</dbReference>
<dbReference type="GO" id="GO:0005654">
    <property type="term" value="C:nucleoplasm"/>
    <property type="evidence" value="ECO:0000314"/>
    <property type="project" value="HPA"/>
</dbReference>
<dbReference type="GO" id="GO:0005634">
    <property type="term" value="C:nucleus"/>
    <property type="evidence" value="ECO:0000314"/>
    <property type="project" value="UniProtKB"/>
</dbReference>
<dbReference type="GO" id="GO:0005886">
    <property type="term" value="C:plasma membrane"/>
    <property type="evidence" value="ECO:0000314"/>
    <property type="project" value="HPA"/>
</dbReference>
<dbReference type="GO" id="GO:0002102">
    <property type="term" value="C:podosome"/>
    <property type="evidence" value="ECO:0007669"/>
    <property type="project" value="UniProtKB-SubCell"/>
</dbReference>
<dbReference type="GO" id="GO:0005525">
    <property type="term" value="F:GTP binding"/>
    <property type="evidence" value="ECO:0000304"/>
    <property type="project" value="ProtInc"/>
</dbReference>
<dbReference type="GO" id="GO:0005085">
    <property type="term" value="F:guanyl-nucleotide exchange factor activity"/>
    <property type="evidence" value="ECO:0000314"/>
    <property type="project" value="UniProtKB"/>
</dbReference>
<dbReference type="GO" id="GO:0008289">
    <property type="term" value="F:lipid binding"/>
    <property type="evidence" value="ECO:0007669"/>
    <property type="project" value="UniProtKB-KW"/>
</dbReference>
<dbReference type="GO" id="GO:0030036">
    <property type="term" value="P:actin cytoskeleton organization"/>
    <property type="evidence" value="ECO:0007669"/>
    <property type="project" value="Ensembl"/>
</dbReference>
<dbReference type="GO" id="GO:0061484">
    <property type="term" value="P:hematopoietic stem cell homeostasis"/>
    <property type="evidence" value="ECO:0007669"/>
    <property type="project" value="Ensembl"/>
</dbReference>
<dbReference type="GO" id="GO:0035556">
    <property type="term" value="P:intracellular signal transduction"/>
    <property type="evidence" value="ECO:0007669"/>
    <property type="project" value="InterPro"/>
</dbReference>
<dbReference type="GO" id="GO:0002408">
    <property type="term" value="P:myeloid dendritic cell chemotaxis"/>
    <property type="evidence" value="ECO:0007669"/>
    <property type="project" value="Ensembl"/>
</dbReference>
<dbReference type="GO" id="GO:0051091">
    <property type="term" value="P:positive regulation of DNA-binding transcription factor activity"/>
    <property type="evidence" value="ECO:0000314"/>
    <property type="project" value="UniProtKB"/>
</dbReference>
<dbReference type="GO" id="GO:0043507">
    <property type="term" value="P:positive regulation of JUN kinase activity"/>
    <property type="evidence" value="ECO:0000314"/>
    <property type="project" value="UniProtKB"/>
</dbReference>
<dbReference type="GO" id="GO:0071803">
    <property type="term" value="P:positive regulation of podosome assembly"/>
    <property type="evidence" value="ECO:0007669"/>
    <property type="project" value="Ensembl"/>
</dbReference>
<dbReference type="GO" id="GO:1904591">
    <property type="term" value="P:positive regulation of protein import"/>
    <property type="evidence" value="ECO:0000315"/>
    <property type="project" value="UniProtKB"/>
</dbReference>
<dbReference type="GO" id="GO:0051496">
    <property type="term" value="P:positive regulation of stress fiber assembly"/>
    <property type="evidence" value="ECO:0000315"/>
    <property type="project" value="UniProtKB"/>
</dbReference>
<dbReference type="GO" id="GO:0032956">
    <property type="term" value="P:regulation of actin cytoskeleton organization"/>
    <property type="evidence" value="ECO:0000315"/>
    <property type="project" value="UniProtKB"/>
</dbReference>
<dbReference type="GO" id="GO:0051493">
    <property type="term" value="P:regulation of cytoskeleton organization"/>
    <property type="evidence" value="ECO:0000315"/>
    <property type="project" value="UniProtKB"/>
</dbReference>
<dbReference type="GO" id="GO:0043087">
    <property type="term" value="P:regulation of GTPase activity"/>
    <property type="evidence" value="ECO:0000314"/>
    <property type="project" value="MGI"/>
</dbReference>
<dbReference type="GO" id="GO:0051056">
    <property type="term" value="P:regulation of small GTPase mediated signal transduction"/>
    <property type="evidence" value="ECO:0000304"/>
    <property type="project" value="Reactome"/>
</dbReference>
<dbReference type="CDD" id="cd01221">
    <property type="entry name" value="PH_ephexin"/>
    <property type="match status" value="1"/>
</dbReference>
<dbReference type="CDD" id="cd00160">
    <property type="entry name" value="RhoGEF"/>
    <property type="match status" value="1"/>
</dbReference>
<dbReference type="CDD" id="cd11940">
    <property type="entry name" value="SH3_ARHGEF5_19"/>
    <property type="match status" value="1"/>
</dbReference>
<dbReference type="FunFam" id="2.30.29.30:FF:000205">
    <property type="entry name" value="Rho guanine nucleotide exchange factor (GEF) 19"/>
    <property type="match status" value="1"/>
</dbReference>
<dbReference type="FunFam" id="2.30.30.40:FF:000111">
    <property type="entry name" value="Rho guanine nucleotide exchange factor (GEF) 5"/>
    <property type="match status" value="1"/>
</dbReference>
<dbReference type="FunFam" id="1.20.900.10:FF:000007">
    <property type="entry name" value="rho guanine nucleotide exchange factor 19"/>
    <property type="match status" value="1"/>
</dbReference>
<dbReference type="Gene3D" id="1.20.900.10">
    <property type="entry name" value="Dbl homology (DH) domain"/>
    <property type="match status" value="1"/>
</dbReference>
<dbReference type="Gene3D" id="2.30.29.30">
    <property type="entry name" value="Pleckstrin-homology domain (PH domain)/Phosphotyrosine-binding domain (PTB)"/>
    <property type="match status" value="1"/>
</dbReference>
<dbReference type="Gene3D" id="2.30.30.40">
    <property type="entry name" value="SH3 Domains"/>
    <property type="match status" value="1"/>
</dbReference>
<dbReference type="InterPro" id="IPR029212">
    <property type="entry name" value="ARHGEF5/35_N"/>
</dbReference>
<dbReference type="InterPro" id="IPR035899">
    <property type="entry name" value="DBL_dom_sf"/>
</dbReference>
<dbReference type="InterPro" id="IPR000219">
    <property type="entry name" value="DH_dom"/>
</dbReference>
<dbReference type="InterPro" id="IPR047271">
    <property type="entry name" value="Ephexin-like"/>
</dbReference>
<dbReference type="InterPro" id="IPR001331">
    <property type="entry name" value="GDS_CDC24_CS"/>
</dbReference>
<dbReference type="InterPro" id="IPR011993">
    <property type="entry name" value="PH-like_dom_sf"/>
</dbReference>
<dbReference type="InterPro" id="IPR001849">
    <property type="entry name" value="PH_domain"/>
</dbReference>
<dbReference type="InterPro" id="IPR047270">
    <property type="entry name" value="PH_ephexin"/>
</dbReference>
<dbReference type="InterPro" id="IPR036028">
    <property type="entry name" value="SH3-like_dom_sf"/>
</dbReference>
<dbReference type="InterPro" id="IPR001452">
    <property type="entry name" value="SH3_domain"/>
</dbReference>
<dbReference type="PANTHER" id="PTHR12845:SF2">
    <property type="entry name" value="DH DOMAIN-CONTAINING PROTEIN-RELATED"/>
    <property type="match status" value="1"/>
</dbReference>
<dbReference type="PANTHER" id="PTHR12845">
    <property type="entry name" value="GUANINE NUCLEOTIDE EXCHANGE FACTOR"/>
    <property type="match status" value="1"/>
</dbReference>
<dbReference type="Pfam" id="PF15441">
    <property type="entry name" value="ARHGEF5_35"/>
    <property type="match status" value="1"/>
</dbReference>
<dbReference type="Pfam" id="PF00169">
    <property type="entry name" value="PH"/>
    <property type="match status" value="1"/>
</dbReference>
<dbReference type="Pfam" id="PF00621">
    <property type="entry name" value="RhoGEF"/>
    <property type="match status" value="1"/>
</dbReference>
<dbReference type="Pfam" id="PF00018">
    <property type="entry name" value="SH3_1"/>
    <property type="match status" value="1"/>
</dbReference>
<dbReference type="SMART" id="SM00233">
    <property type="entry name" value="PH"/>
    <property type="match status" value="1"/>
</dbReference>
<dbReference type="SMART" id="SM00325">
    <property type="entry name" value="RhoGEF"/>
    <property type="match status" value="1"/>
</dbReference>
<dbReference type="SMART" id="SM00326">
    <property type="entry name" value="SH3"/>
    <property type="match status" value="1"/>
</dbReference>
<dbReference type="SUPFAM" id="SSF48065">
    <property type="entry name" value="DBL homology domain (DH-domain)"/>
    <property type="match status" value="1"/>
</dbReference>
<dbReference type="SUPFAM" id="SSF50729">
    <property type="entry name" value="PH domain-like"/>
    <property type="match status" value="1"/>
</dbReference>
<dbReference type="SUPFAM" id="SSF50044">
    <property type="entry name" value="SH3-domain"/>
    <property type="match status" value="1"/>
</dbReference>
<dbReference type="PROSITE" id="PS00741">
    <property type="entry name" value="DH_1"/>
    <property type="match status" value="1"/>
</dbReference>
<dbReference type="PROSITE" id="PS50010">
    <property type="entry name" value="DH_2"/>
    <property type="match status" value="1"/>
</dbReference>
<dbReference type="PROSITE" id="PS50003">
    <property type="entry name" value="PH_DOMAIN"/>
    <property type="match status" value="1"/>
</dbReference>
<dbReference type="PROSITE" id="PS50002">
    <property type="entry name" value="SH3"/>
    <property type="match status" value="1"/>
</dbReference>